<protein>
    <recommendedName>
        <fullName evidence="1">Draxin</fullName>
    </recommendedName>
    <alternativeName>
        <fullName evidence="1">Dorsal inhibitory axon guidance protein</fullName>
    </alternativeName>
    <alternativeName>
        <fullName evidence="1">Dorsal repulsive axon guidance protein</fullName>
    </alternativeName>
    <alternativeName>
        <fullName>Neucrin</fullName>
    </alternativeName>
</protein>
<feature type="signal peptide" evidence="1">
    <location>
        <begin position="1"/>
        <end position="25"/>
    </location>
</feature>
<feature type="chain" id="PRO_0000273244" description="Draxin">
    <location>
        <begin position="26"/>
        <end position="343"/>
    </location>
</feature>
<feature type="region of interest" description="Disordered" evidence="2">
    <location>
        <begin position="52"/>
        <end position="79"/>
    </location>
</feature>
<feature type="glycosylation site" description="N-linked (GlcNAc...) asparagine" evidence="1">
    <location>
        <position position="258"/>
    </location>
</feature>
<feature type="sequence conflict" description="In Ref. 2; BAG80560 and 4; CAQ51921." evidence="6" ref="2 4">
    <original>T</original>
    <variation>S</variation>
    <location>
        <position position="82"/>
    </location>
</feature>
<feature type="sequence conflict" description="In Ref. 2; BAG80560 and 4; CAQ51921." evidence="6" ref="2 4">
    <original>A</original>
    <variation>G</variation>
    <location>
        <position position="122"/>
    </location>
</feature>
<feature type="sequence conflict" description="In Ref. 3; BAC39628." evidence="6" ref="3">
    <original>T</original>
    <variation>N</variation>
    <location>
        <position position="186"/>
    </location>
</feature>
<feature type="sequence conflict" description="In Ref. 2; BAG80560 and 4; CAQ51921." evidence="6" ref="2 4">
    <original>T</original>
    <variation>A</variation>
    <location>
        <position position="188"/>
    </location>
</feature>
<evidence type="ECO:0000255" key="1">
    <source>
        <dbReference type="HAMAP-Rule" id="MF_03060"/>
    </source>
</evidence>
<evidence type="ECO:0000256" key="2">
    <source>
        <dbReference type="SAM" id="MobiDB-lite"/>
    </source>
</evidence>
<evidence type="ECO:0000269" key="3">
    <source>
    </source>
</evidence>
<evidence type="ECO:0000269" key="4">
    <source>
    </source>
</evidence>
<evidence type="ECO:0000269" key="5">
    <source>
    </source>
</evidence>
<evidence type="ECO:0000305" key="6"/>
<proteinExistence type="evidence at protein level"/>
<comment type="function">
    <text evidence="1 4 5">Chemorepulsive axon guidance protein required for the development of spinal cord and forebrain commissures. Acts as a chemorepulsive guidance protein for commissural axons during development. Able to inhibit or repel neurite outgrowth from dorsal spinal cord. Inhibits the stabilization of cytosolic beta-catenin (CTNNB1) via its interaction with LRP6, thereby acting as an antagonist of Wnt signaling pathway.</text>
</comment>
<comment type="subunit">
    <text evidence="1 4">Interacts with LRP6.</text>
</comment>
<comment type="subcellular location">
    <subcellularLocation>
        <location evidence="1">Secreted</location>
    </subcellularLocation>
</comment>
<comment type="tissue specificity">
    <text evidence="3 4 5">In embryonic brain, strong expression in the olfactory bulb, anterior olfactory nucleus, neocortex, piriform cortex, glial wedge, midline zipper glia, indusium griseum and the area surrounding the anterior commissure (AC) but not on AC axons (at protein level) (PubMed:23206892). Predominantly expressed in developing neural tissues. Expressed in many brain regions, including the olfactory bulb, cortex, midbrain, cerebellum and pontine nuclei in neonates. Detected in the dorsal spinal cord and commissural axons. In the forebrain commissures, it is expressed in the regions that surround the corpus callosum, hippocampal commissure, and anterior commissure, such as the midline glial cells, indusium griseum glia, and glial wedge.</text>
</comment>
<comment type="disruption phenotype">
    <text evidence="3 5">Mice are viable and fertile (PubMed:19150847). They however show a defasciculation of spinal cord commissural axons and absence of all forebrain commissures (PubMed:19150847, PubMed:23206892). Double knockout of Tsku and Draxi results in a higher frequency of anterior commissure defects than single knockout of either Tsku or Draxi (PubMed:23206892).</text>
</comment>
<comment type="similarity">
    <text evidence="1">Belongs to the draxin family.</text>
</comment>
<organism>
    <name type="scientific">Mus musculus</name>
    <name type="common">Mouse</name>
    <dbReference type="NCBI Taxonomy" id="10090"/>
    <lineage>
        <taxon>Eukaryota</taxon>
        <taxon>Metazoa</taxon>
        <taxon>Chordata</taxon>
        <taxon>Craniata</taxon>
        <taxon>Vertebrata</taxon>
        <taxon>Euteleostomi</taxon>
        <taxon>Mammalia</taxon>
        <taxon>Eutheria</taxon>
        <taxon>Euarchontoglires</taxon>
        <taxon>Glires</taxon>
        <taxon>Rodentia</taxon>
        <taxon>Myomorpha</taxon>
        <taxon>Muroidea</taxon>
        <taxon>Muridae</taxon>
        <taxon>Murinae</taxon>
        <taxon>Mus</taxon>
        <taxon>Mus</taxon>
    </lineage>
</organism>
<reference key="1">
    <citation type="journal article" date="2009" name="Biochem. Biophys. Res. Commun.">
        <title>Neucrin is a novel neural-specific secreted antagonist to canonical Wnt signaling.</title>
        <authorList>
            <person name="Miyake A."/>
            <person name="Takahashi Y."/>
            <person name="Miwa H."/>
            <person name="Shimada A."/>
            <person name="Konishi M."/>
            <person name="Itoh N."/>
        </authorList>
    </citation>
    <scope>NUCLEOTIDE SEQUENCE [MRNA]</scope>
    <scope>FUNCTION</scope>
    <scope>INTERACTION WITH LRP6</scope>
    <scope>TISSUE SPECIFICITY</scope>
</reference>
<reference key="2">
    <citation type="journal article" date="2005" name="Science">
        <title>The transcriptional landscape of the mammalian genome.</title>
        <authorList>
            <person name="Carninci P."/>
            <person name="Kasukawa T."/>
            <person name="Katayama S."/>
            <person name="Gough J."/>
            <person name="Frith M.C."/>
            <person name="Maeda N."/>
            <person name="Oyama R."/>
            <person name="Ravasi T."/>
            <person name="Lenhard B."/>
            <person name="Wells C."/>
            <person name="Kodzius R."/>
            <person name="Shimokawa K."/>
            <person name="Bajic V.B."/>
            <person name="Brenner S.E."/>
            <person name="Batalov S."/>
            <person name="Forrest A.R."/>
            <person name="Zavolan M."/>
            <person name="Davis M.J."/>
            <person name="Wilming L.G."/>
            <person name="Aidinis V."/>
            <person name="Allen J.E."/>
            <person name="Ambesi-Impiombato A."/>
            <person name="Apweiler R."/>
            <person name="Aturaliya R.N."/>
            <person name="Bailey T.L."/>
            <person name="Bansal M."/>
            <person name="Baxter L."/>
            <person name="Beisel K.W."/>
            <person name="Bersano T."/>
            <person name="Bono H."/>
            <person name="Chalk A.M."/>
            <person name="Chiu K.P."/>
            <person name="Choudhary V."/>
            <person name="Christoffels A."/>
            <person name="Clutterbuck D.R."/>
            <person name="Crowe M.L."/>
            <person name="Dalla E."/>
            <person name="Dalrymple B.P."/>
            <person name="de Bono B."/>
            <person name="Della Gatta G."/>
            <person name="di Bernardo D."/>
            <person name="Down T."/>
            <person name="Engstrom P."/>
            <person name="Fagiolini M."/>
            <person name="Faulkner G."/>
            <person name="Fletcher C.F."/>
            <person name="Fukushima T."/>
            <person name="Furuno M."/>
            <person name="Futaki S."/>
            <person name="Gariboldi M."/>
            <person name="Georgii-Hemming P."/>
            <person name="Gingeras T.R."/>
            <person name="Gojobori T."/>
            <person name="Green R.E."/>
            <person name="Gustincich S."/>
            <person name="Harbers M."/>
            <person name="Hayashi Y."/>
            <person name="Hensch T.K."/>
            <person name="Hirokawa N."/>
            <person name="Hill D."/>
            <person name="Huminiecki L."/>
            <person name="Iacono M."/>
            <person name="Ikeo K."/>
            <person name="Iwama A."/>
            <person name="Ishikawa T."/>
            <person name="Jakt M."/>
            <person name="Kanapin A."/>
            <person name="Katoh M."/>
            <person name="Kawasawa Y."/>
            <person name="Kelso J."/>
            <person name="Kitamura H."/>
            <person name="Kitano H."/>
            <person name="Kollias G."/>
            <person name="Krishnan S.P."/>
            <person name="Kruger A."/>
            <person name="Kummerfeld S.K."/>
            <person name="Kurochkin I.V."/>
            <person name="Lareau L.F."/>
            <person name="Lazarevic D."/>
            <person name="Lipovich L."/>
            <person name="Liu J."/>
            <person name="Liuni S."/>
            <person name="McWilliam S."/>
            <person name="Madan Babu M."/>
            <person name="Madera M."/>
            <person name="Marchionni L."/>
            <person name="Matsuda H."/>
            <person name="Matsuzawa S."/>
            <person name="Miki H."/>
            <person name="Mignone F."/>
            <person name="Miyake S."/>
            <person name="Morris K."/>
            <person name="Mottagui-Tabar S."/>
            <person name="Mulder N."/>
            <person name="Nakano N."/>
            <person name="Nakauchi H."/>
            <person name="Ng P."/>
            <person name="Nilsson R."/>
            <person name="Nishiguchi S."/>
            <person name="Nishikawa S."/>
            <person name="Nori F."/>
            <person name="Ohara O."/>
            <person name="Okazaki Y."/>
            <person name="Orlando V."/>
            <person name="Pang K.C."/>
            <person name="Pavan W.J."/>
            <person name="Pavesi G."/>
            <person name="Pesole G."/>
            <person name="Petrovsky N."/>
            <person name="Piazza S."/>
            <person name="Reed J."/>
            <person name="Reid J.F."/>
            <person name="Ring B.Z."/>
            <person name="Ringwald M."/>
            <person name="Rost B."/>
            <person name="Ruan Y."/>
            <person name="Salzberg S.L."/>
            <person name="Sandelin A."/>
            <person name="Schneider C."/>
            <person name="Schoenbach C."/>
            <person name="Sekiguchi K."/>
            <person name="Semple C.A."/>
            <person name="Seno S."/>
            <person name="Sessa L."/>
            <person name="Sheng Y."/>
            <person name="Shibata Y."/>
            <person name="Shimada H."/>
            <person name="Shimada K."/>
            <person name="Silva D."/>
            <person name="Sinclair B."/>
            <person name="Sperling S."/>
            <person name="Stupka E."/>
            <person name="Sugiura K."/>
            <person name="Sultana R."/>
            <person name="Takenaka Y."/>
            <person name="Taki K."/>
            <person name="Tammoja K."/>
            <person name="Tan S.L."/>
            <person name="Tang S."/>
            <person name="Taylor M.S."/>
            <person name="Tegner J."/>
            <person name="Teichmann S.A."/>
            <person name="Ueda H.R."/>
            <person name="van Nimwegen E."/>
            <person name="Verardo R."/>
            <person name="Wei C.L."/>
            <person name="Yagi K."/>
            <person name="Yamanishi H."/>
            <person name="Zabarovsky E."/>
            <person name="Zhu S."/>
            <person name="Zimmer A."/>
            <person name="Hide W."/>
            <person name="Bult C."/>
            <person name="Grimmond S.M."/>
            <person name="Teasdale R.D."/>
            <person name="Liu E.T."/>
            <person name="Brusic V."/>
            <person name="Quackenbush J."/>
            <person name="Wahlestedt C."/>
            <person name="Mattick J.S."/>
            <person name="Hume D.A."/>
            <person name="Kai C."/>
            <person name="Sasaki D."/>
            <person name="Tomaru Y."/>
            <person name="Fukuda S."/>
            <person name="Kanamori-Katayama M."/>
            <person name="Suzuki M."/>
            <person name="Aoki J."/>
            <person name="Arakawa T."/>
            <person name="Iida J."/>
            <person name="Imamura K."/>
            <person name="Itoh M."/>
            <person name="Kato T."/>
            <person name="Kawaji H."/>
            <person name="Kawagashira N."/>
            <person name="Kawashima T."/>
            <person name="Kojima M."/>
            <person name="Kondo S."/>
            <person name="Konno H."/>
            <person name="Nakano K."/>
            <person name="Ninomiya N."/>
            <person name="Nishio T."/>
            <person name="Okada M."/>
            <person name="Plessy C."/>
            <person name="Shibata K."/>
            <person name="Shiraki T."/>
            <person name="Suzuki S."/>
            <person name="Tagami M."/>
            <person name="Waki K."/>
            <person name="Watahiki A."/>
            <person name="Okamura-Oho Y."/>
            <person name="Suzuki H."/>
            <person name="Kawai J."/>
            <person name="Hayashizaki Y."/>
        </authorList>
    </citation>
    <scope>NUCLEOTIDE SEQUENCE [LARGE SCALE MRNA]</scope>
    <source>
        <strain>C57BL/6J</strain>
        <tissue>Head</tissue>
    </source>
</reference>
<reference key="3">
    <citation type="journal article" date="2009" name="PLoS Biol.">
        <title>Lineage-specific biology revealed by a finished genome assembly of the mouse.</title>
        <authorList>
            <person name="Church D.M."/>
            <person name="Goodstadt L."/>
            <person name="Hillier L.W."/>
            <person name="Zody M.C."/>
            <person name="Goldstein S."/>
            <person name="She X."/>
            <person name="Bult C.J."/>
            <person name="Agarwala R."/>
            <person name="Cherry J.L."/>
            <person name="DiCuccio M."/>
            <person name="Hlavina W."/>
            <person name="Kapustin Y."/>
            <person name="Meric P."/>
            <person name="Maglott D."/>
            <person name="Birtle Z."/>
            <person name="Marques A.C."/>
            <person name="Graves T."/>
            <person name="Zhou S."/>
            <person name="Teague B."/>
            <person name="Potamousis K."/>
            <person name="Churas C."/>
            <person name="Place M."/>
            <person name="Herschleb J."/>
            <person name="Runnheim R."/>
            <person name="Forrest D."/>
            <person name="Amos-Landgraf J."/>
            <person name="Schwartz D.C."/>
            <person name="Cheng Z."/>
            <person name="Lindblad-Toh K."/>
            <person name="Eichler E.E."/>
            <person name="Ponting C.P."/>
        </authorList>
    </citation>
    <scope>NUCLEOTIDE SEQUENCE [LARGE SCALE GENOMIC DNA]</scope>
    <source>
        <strain>C57BL/6J</strain>
    </source>
</reference>
<reference key="4">
    <citation type="journal article" date="2004" name="Genome Res.">
        <title>The status, quality, and expansion of the NIH full-length cDNA project: the Mammalian Gene Collection (MGC).</title>
        <authorList>
            <consortium name="The MGC Project Team"/>
        </authorList>
    </citation>
    <scope>NUCLEOTIDE SEQUENCE [LARGE SCALE MRNA]</scope>
    <source>
        <strain>C57BL/6J</strain>
        <tissue>Brain</tissue>
    </source>
</reference>
<reference key="5">
    <citation type="journal article" date="2009" name="Science">
        <title>Draxin, a repulsive guidance protein for spinal cord and forebrain commissures.</title>
        <authorList>
            <person name="Islam S.M."/>
            <person name="Shinmyo Y."/>
            <person name="Okafuji T."/>
            <person name="Su Y."/>
            <person name="Naser I.B."/>
            <person name="Ahmed G."/>
            <person name="Zhang S."/>
            <person name="Chen S."/>
            <person name="Ohta K."/>
            <person name="Kiyonari H."/>
            <person name="Abe T."/>
            <person name="Tanaka S."/>
            <person name="Nishinakamura R."/>
            <person name="Terashima T."/>
            <person name="Kitamura T."/>
            <person name="Tanaka H."/>
        </authorList>
    </citation>
    <scope>TISSUE SPECIFICITY</scope>
    <scope>DISRUPTION PHENOTYPE</scope>
</reference>
<reference key="6">
    <citation type="journal article" date="2013" name="Dev. Biol.">
        <title>The combinatorial guidance activities of draxin and Tsukushi are essential for forebrain commissure formation.</title>
        <authorList>
            <person name="Hossain M."/>
            <person name="Ahmed G."/>
            <person name="Naser I.B."/>
            <person name="Shinmyo Y."/>
            <person name="Ito A."/>
            <person name="Riyadh M.A."/>
            <person name="Felemban A."/>
            <person name="Song X."/>
            <person name="Ohta K."/>
            <person name="Tanaka H."/>
        </authorList>
    </citation>
    <scope>FUNCTION</scope>
    <scope>TISSUE SPECIFICITY</scope>
    <scope>DISRUPTION PHENOTYPE</scope>
</reference>
<sequence length="343" mass="38363">MAGCPVLRVPTLFLILLLFPELHTAGTLASGSSARNLPETHSHLPSSALWVSQASHHGRRGLGKKDRGPGRPSRAQEGAVVTATKQASQMTLGQPPAGLLQNKELLLGLTLPYPEKEARSPAWERVKKRGREHKRRRDRLRLHRGRAAIRGPSSLMKKVEPSEDRMLEGTMEESSTSLAPTMFFLTMTDGATPTTEESRILPVTSLRPQTQPRSDGEVMPTLDMALFDWTDYEDLKPEVWPSAKKKEKHWSHFTSDGNETSPAEGDPCDHHQDCLPGTCCDLREHLCTPHNRGLNNKCFDDCMCMEGLRCYAKFHRNRRVTRRKGRCVEPETANGDQGSFINI</sequence>
<keyword id="KW-0217">Developmental protein</keyword>
<keyword id="KW-0325">Glycoprotein</keyword>
<keyword id="KW-1185">Reference proteome</keyword>
<keyword id="KW-0964">Secreted</keyword>
<keyword id="KW-0732">Signal</keyword>
<keyword id="KW-0879">Wnt signaling pathway</keyword>
<name>DRAXI_MOUSE</name>
<accession>Q6PAL1</accession>
<accession>A2A7G4</accession>
<accession>B2KFL9</accession>
<accession>Q8C3D8</accession>
<dbReference type="EMBL" id="AB301918">
    <property type="protein sequence ID" value="BAG80560.1"/>
    <property type="molecule type" value="mRNA"/>
</dbReference>
<dbReference type="EMBL" id="AK086198">
    <property type="protein sequence ID" value="BAC39628.1"/>
    <property type="molecule type" value="mRNA"/>
</dbReference>
<dbReference type="EMBL" id="AL606929">
    <property type="protein sequence ID" value="CAM14900.1"/>
    <property type="molecule type" value="Genomic_DNA"/>
</dbReference>
<dbReference type="EMBL" id="CU207376">
    <property type="protein sequence ID" value="CAQ51921.1"/>
    <property type="molecule type" value="Genomic_DNA"/>
</dbReference>
<dbReference type="EMBL" id="BC060239">
    <property type="protein sequence ID" value="AAH60239.2"/>
    <property type="molecule type" value="mRNA"/>
</dbReference>
<dbReference type="CCDS" id="CCDS18931.1"/>
<dbReference type="RefSeq" id="NP_081702.2">
    <property type="nucleotide sequence ID" value="NM_027426.3"/>
</dbReference>
<dbReference type="SMR" id="Q6PAL1"/>
<dbReference type="BioGRID" id="214047">
    <property type="interactions" value="1"/>
</dbReference>
<dbReference type="FunCoup" id="Q6PAL1">
    <property type="interactions" value="334"/>
</dbReference>
<dbReference type="STRING" id="10090.ENSMUSP00000030862"/>
<dbReference type="GlyCosmos" id="Q6PAL1">
    <property type="glycosylation" value="1 site, No reported glycans"/>
</dbReference>
<dbReference type="GlyGen" id="Q6PAL1">
    <property type="glycosylation" value="1 site"/>
</dbReference>
<dbReference type="PhosphoSitePlus" id="Q6PAL1"/>
<dbReference type="PaxDb" id="10090-ENSMUSP00000030862"/>
<dbReference type="ProteomicsDB" id="279573"/>
<dbReference type="Antibodypedia" id="2659">
    <property type="antibodies" value="147 antibodies from 26 providers"/>
</dbReference>
<dbReference type="DNASU" id="70433"/>
<dbReference type="Ensembl" id="ENSMUST00000030862.5">
    <property type="protein sequence ID" value="ENSMUSP00000030862.5"/>
    <property type="gene ID" value="ENSMUSG00000029005.5"/>
</dbReference>
<dbReference type="GeneID" id="70433"/>
<dbReference type="KEGG" id="mmu:70433"/>
<dbReference type="UCSC" id="uc008vua.2">
    <property type="organism name" value="mouse"/>
</dbReference>
<dbReference type="AGR" id="MGI:1917683"/>
<dbReference type="CTD" id="374946"/>
<dbReference type="MGI" id="MGI:1917683">
    <property type="gene designation" value="Draxin"/>
</dbReference>
<dbReference type="VEuPathDB" id="HostDB:ENSMUSG00000029005"/>
<dbReference type="eggNOG" id="ENOG502QUE0">
    <property type="taxonomic scope" value="Eukaryota"/>
</dbReference>
<dbReference type="GeneTree" id="ENSGT00390000013828"/>
<dbReference type="HOGENOM" id="CLU_063473_0_0_1"/>
<dbReference type="InParanoid" id="Q6PAL1"/>
<dbReference type="OMA" id="WTPQTSH"/>
<dbReference type="OrthoDB" id="9931375at2759"/>
<dbReference type="PhylomeDB" id="Q6PAL1"/>
<dbReference type="TreeFam" id="TF333255"/>
<dbReference type="BioGRID-ORCS" id="70433">
    <property type="hits" value="5 hits in 80 CRISPR screens"/>
</dbReference>
<dbReference type="ChiTaRS" id="Draxin">
    <property type="organism name" value="mouse"/>
</dbReference>
<dbReference type="PRO" id="PR:Q6PAL1"/>
<dbReference type="Proteomes" id="UP000000589">
    <property type="component" value="Chromosome 4"/>
</dbReference>
<dbReference type="RNAct" id="Q6PAL1">
    <property type="molecule type" value="protein"/>
</dbReference>
<dbReference type="Bgee" id="ENSMUSG00000029005">
    <property type="expression patterns" value="Expressed in basal plate medulla oblongata and 72 other cell types or tissues"/>
</dbReference>
<dbReference type="GO" id="GO:0005576">
    <property type="term" value="C:extracellular region"/>
    <property type="evidence" value="ECO:0000314"/>
    <property type="project" value="MGI"/>
</dbReference>
<dbReference type="GO" id="GO:0021960">
    <property type="term" value="P:anterior commissure morphogenesis"/>
    <property type="evidence" value="ECO:0000315"/>
    <property type="project" value="UniProtKB"/>
</dbReference>
<dbReference type="GO" id="GO:0007411">
    <property type="term" value="P:axon guidance"/>
    <property type="evidence" value="ECO:0000315"/>
    <property type="project" value="UniProtKB"/>
</dbReference>
<dbReference type="GO" id="GO:0021528">
    <property type="term" value="P:commissural neuron differentiation in spinal cord"/>
    <property type="evidence" value="ECO:0000315"/>
    <property type="project" value="UniProtKB"/>
</dbReference>
<dbReference type="GO" id="GO:0021516">
    <property type="term" value="P:dorsal spinal cord development"/>
    <property type="evidence" value="ECO:0000315"/>
    <property type="project" value="UniProtKB"/>
</dbReference>
<dbReference type="GO" id="GO:0030900">
    <property type="term" value="P:forebrain development"/>
    <property type="evidence" value="ECO:0000315"/>
    <property type="project" value="UniProtKB"/>
</dbReference>
<dbReference type="GO" id="GO:0110088">
    <property type="term" value="P:hippocampal neuron apoptotic process"/>
    <property type="evidence" value="ECO:0000315"/>
    <property type="project" value="MGI"/>
</dbReference>
<dbReference type="GO" id="GO:0030517">
    <property type="term" value="P:negative regulation of axon extension"/>
    <property type="evidence" value="ECO:0000314"/>
    <property type="project" value="MGI"/>
</dbReference>
<dbReference type="GO" id="GO:0090090">
    <property type="term" value="P:negative regulation of canonical Wnt signaling pathway"/>
    <property type="evidence" value="ECO:0000314"/>
    <property type="project" value="UniProtKB"/>
</dbReference>
<dbReference type="GO" id="GO:0110091">
    <property type="term" value="P:negative regulation of hippocampal neuron apoptotic process"/>
    <property type="evidence" value="ECO:0000315"/>
    <property type="project" value="MGI"/>
</dbReference>
<dbReference type="GO" id="GO:0010977">
    <property type="term" value="P:negative regulation of neuron projection development"/>
    <property type="evidence" value="ECO:0000315"/>
    <property type="project" value="UniProtKB"/>
</dbReference>
<dbReference type="GO" id="GO:0051402">
    <property type="term" value="P:neuron apoptotic process"/>
    <property type="evidence" value="ECO:0000315"/>
    <property type="project" value="MGI"/>
</dbReference>
<dbReference type="GO" id="GO:0016055">
    <property type="term" value="P:Wnt signaling pathway"/>
    <property type="evidence" value="ECO:0007669"/>
    <property type="project" value="UniProtKB-KW"/>
</dbReference>
<dbReference type="HAMAP" id="MF_03060">
    <property type="entry name" value="Draxin"/>
    <property type="match status" value="1"/>
</dbReference>
<dbReference type="InterPro" id="IPR029094">
    <property type="entry name" value="Draxin"/>
</dbReference>
<dbReference type="PANTHER" id="PTHR28610">
    <property type="entry name" value="DRAXIN"/>
    <property type="match status" value="1"/>
</dbReference>
<dbReference type="PANTHER" id="PTHR28610:SF1">
    <property type="entry name" value="DRAXIN"/>
    <property type="match status" value="1"/>
</dbReference>
<dbReference type="Pfam" id="PF15550">
    <property type="entry name" value="Draxin"/>
    <property type="match status" value="1"/>
</dbReference>
<gene>
    <name type="primary">Draxin</name>
</gene>